<name>YDDG_SALT1</name>
<accession>D0ZXP9</accession>
<reference key="1">
    <citation type="journal article" date="2010" name="J. Bacteriol.">
        <title>Short-term signatures of evolutionary change in the Salmonella enterica serovar typhimurium 14028 genome.</title>
        <authorList>
            <person name="Jarvik T."/>
            <person name="Smillie C."/>
            <person name="Groisman E.A."/>
            <person name="Ochman H."/>
        </authorList>
    </citation>
    <scope>NUCLEOTIDE SEQUENCE [LARGE SCALE GENOMIC DNA]</scope>
    <source>
        <strain>14028s / SGSC 2262</strain>
    </source>
</reference>
<reference key="2">
    <citation type="journal article" date="2002" name="Mol. Microbiol.">
        <title>The Salmonella enterica sv. Typhimurium smvA, yddG and ompD (porin) genes are required for the efficient efflux of methyl viologen.</title>
        <authorList>
            <person name="Santiviago C.A."/>
            <person name="Fuentes J.A."/>
            <person name="Bueno S.M."/>
            <person name="Trombert A.N."/>
            <person name="Hildago A.A."/>
            <person name="Socias L.T."/>
            <person name="Youderian P."/>
            <person name="Mora G.C."/>
        </authorList>
    </citation>
    <scope>FUNCTION IN METHYL VIOLOGEN RESISTANCE</scope>
    <scope>DISRUPTION PHENOTYPE</scope>
    <source>
        <strain>14028s / SGSC 2262</strain>
    </source>
</reference>
<proteinExistence type="evidence at protein level"/>
<sequence length="293" mass="31427">MTSQKATLIGLVAIVLWSTMVGLIRGVSEGLGPVGGAAMIYSLSGLLLIFTVGLPDIRRFPGRYLIAGSVLFVSYEICLALSLGYAATRHQAIEVGMVNYLWPSLTILFAILFNGQKTNWLIVPGLLIALTGVCWVLGGENGLNPGEIISNVATSPLSYLLAFLGAFIWATYCTVTNKYARGFNGITVFVLLTAVALWLHYFLTPQPAMIFSLPVIAKLFTAALTLGFAYAAWNVGILHGNVTIMAVGSYFTPVMSSALAALLLSSPLSFSFWQGAVMVCVGSLLCWLATRRR</sequence>
<gene>
    <name type="primary">yddG</name>
    <name type="ordered locus">STM14_1896</name>
</gene>
<dbReference type="EMBL" id="CP001363">
    <property type="protein sequence ID" value="ACY88367.1"/>
    <property type="molecule type" value="Genomic_DNA"/>
</dbReference>
<dbReference type="RefSeq" id="WP_000203799.1">
    <property type="nucleotide sequence ID" value="NZ_CP043402.1"/>
</dbReference>
<dbReference type="SMR" id="D0ZXP9"/>
<dbReference type="KEGG" id="seo:STM14_1896"/>
<dbReference type="PATRIC" id="fig|588858.6.peg.1808"/>
<dbReference type="HOGENOM" id="CLU_058959_1_1_6"/>
<dbReference type="BioCyc" id="SENT588858:STM14_RS08730-MONOMER"/>
<dbReference type="Proteomes" id="UP000002695">
    <property type="component" value="Chromosome"/>
</dbReference>
<dbReference type="GO" id="GO:0005886">
    <property type="term" value="C:plasma membrane"/>
    <property type="evidence" value="ECO:0007669"/>
    <property type="project" value="UniProtKB-SubCell"/>
</dbReference>
<dbReference type="GO" id="GO:0006865">
    <property type="term" value="P:amino acid transport"/>
    <property type="evidence" value="ECO:0007669"/>
    <property type="project" value="UniProtKB-KW"/>
</dbReference>
<dbReference type="InterPro" id="IPR051258">
    <property type="entry name" value="Diverse_Substrate_Transporter"/>
</dbReference>
<dbReference type="InterPro" id="IPR000620">
    <property type="entry name" value="EamA_dom"/>
</dbReference>
<dbReference type="NCBIfam" id="NF008676">
    <property type="entry name" value="PRK11689.1"/>
    <property type="match status" value="1"/>
</dbReference>
<dbReference type="PANTHER" id="PTHR42920:SF24">
    <property type="entry name" value="AROMATIC AMINO ACID EXPORTER YDDG"/>
    <property type="match status" value="1"/>
</dbReference>
<dbReference type="PANTHER" id="PTHR42920">
    <property type="entry name" value="OS03G0707200 PROTEIN-RELATED"/>
    <property type="match status" value="1"/>
</dbReference>
<dbReference type="Pfam" id="PF00892">
    <property type="entry name" value="EamA"/>
    <property type="match status" value="2"/>
</dbReference>
<dbReference type="SUPFAM" id="SSF103481">
    <property type="entry name" value="Multidrug resistance efflux transporter EmrE"/>
    <property type="match status" value="2"/>
</dbReference>
<protein>
    <recommendedName>
        <fullName evidence="1">Aromatic amino acid exporter YddG</fullName>
    </recommendedName>
    <alternativeName>
        <fullName>Methyl viologen resistance protein YddG</fullName>
    </alternativeName>
</protein>
<organism>
    <name type="scientific">Salmonella typhimurium (strain 14028s / SGSC 2262)</name>
    <dbReference type="NCBI Taxonomy" id="588858"/>
    <lineage>
        <taxon>Bacteria</taxon>
        <taxon>Pseudomonadati</taxon>
        <taxon>Pseudomonadota</taxon>
        <taxon>Gammaproteobacteria</taxon>
        <taxon>Enterobacterales</taxon>
        <taxon>Enterobacteriaceae</taxon>
        <taxon>Salmonella</taxon>
    </lineage>
</organism>
<evidence type="ECO:0000250" key="1">
    <source>
        <dbReference type="UniProtKB" id="P46136"/>
    </source>
</evidence>
<evidence type="ECO:0000255" key="2"/>
<evidence type="ECO:0000269" key="3">
    <source>
    </source>
</evidence>
<evidence type="ECO:0000305" key="4"/>
<comment type="function">
    <text evidence="1 3">Amino acid transporter with broad substrate specificity (By similarity). Required for resistance to methyl viologen (PubMed:12410826). May function with OmpD porin (PubMed:12410826).</text>
</comment>
<comment type="subcellular location">
    <subcellularLocation>
        <location evidence="1">Cell inner membrane</location>
        <topology evidence="1">Multi-pass membrane protein</topology>
    </subcellularLocation>
</comment>
<comment type="disruption phenotype">
    <text evidence="3">Mutants show increased sensitivity to methyl viologen.</text>
</comment>
<comment type="similarity">
    <text evidence="4">Belongs to the drug/metabolite transporter (DMT) superfamily. Aromatic amino acid/paraquat exporter (ArAA/P-E) (TC 2.A.7.17) family.</text>
</comment>
<keyword id="KW-0029">Amino-acid transport</keyword>
<keyword id="KW-0997">Cell inner membrane</keyword>
<keyword id="KW-1003">Cell membrane</keyword>
<keyword id="KW-0472">Membrane</keyword>
<keyword id="KW-0677">Repeat</keyword>
<keyword id="KW-0812">Transmembrane</keyword>
<keyword id="KW-1133">Transmembrane helix</keyword>
<keyword id="KW-0813">Transport</keyword>
<feature type="chain" id="PRO_0000415645" description="Aromatic amino acid exporter YddG">
    <location>
        <begin position="1"/>
        <end position="293"/>
    </location>
</feature>
<feature type="topological domain" description="Cytoplasmic" evidence="1">
    <location>
        <begin position="1"/>
        <end position="6"/>
    </location>
</feature>
<feature type="transmembrane region" description="Helical" evidence="2">
    <location>
        <begin position="7"/>
        <end position="27"/>
    </location>
</feature>
<feature type="topological domain" description="Periplasmic" evidence="1">
    <location>
        <begin position="28"/>
        <end position="33"/>
    </location>
</feature>
<feature type="transmembrane region" description="Helical" evidence="2">
    <location>
        <begin position="34"/>
        <end position="54"/>
    </location>
</feature>
<feature type="topological domain" description="Cytoplasmic" evidence="1">
    <location>
        <begin position="55"/>
        <end position="63"/>
    </location>
</feature>
<feature type="transmembrane region" description="Helical" evidence="2">
    <location>
        <begin position="64"/>
        <end position="84"/>
    </location>
</feature>
<feature type="topological domain" description="Periplasmic" evidence="1">
    <location>
        <begin position="85"/>
        <end position="92"/>
    </location>
</feature>
<feature type="transmembrane region" description="Helical" evidence="2">
    <location>
        <begin position="93"/>
        <end position="113"/>
    </location>
</feature>
<feature type="topological domain" description="Cytoplasmic" evidence="1">
    <location>
        <begin position="114"/>
        <end position="119"/>
    </location>
</feature>
<feature type="transmembrane region" description="Helical" evidence="2">
    <location>
        <begin position="120"/>
        <end position="140"/>
    </location>
</feature>
<feature type="topological domain" description="Periplasmic" evidence="1">
    <location>
        <begin position="141"/>
        <end position="147"/>
    </location>
</feature>
<feature type="transmembrane region" description="Helical" evidence="2">
    <location>
        <begin position="148"/>
        <end position="168"/>
    </location>
</feature>
<feature type="topological domain" description="Cytoplasmic" evidence="1">
    <location>
        <begin position="169"/>
        <end position="182"/>
    </location>
</feature>
<feature type="transmembrane region" description="Helical" evidence="2">
    <location>
        <begin position="183"/>
        <end position="203"/>
    </location>
</feature>
<feature type="topological domain" description="Periplasmic" evidence="1">
    <location>
        <begin position="204"/>
        <end position="207"/>
    </location>
</feature>
<feature type="transmembrane region" description="Helical" evidence="2">
    <location>
        <begin position="208"/>
        <end position="228"/>
    </location>
</feature>
<feature type="topological domain" description="Cytoplasmic" evidence="1">
    <location>
        <begin position="229"/>
        <end position="243"/>
    </location>
</feature>
<feature type="transmembrane region" description="Helical" evidence="2">
    <location>
        <begin position="244"/>
        <end position="264"/>
    </location>
</feature>
<feature type="topological domain" description="Periplasmic" evidence="1">
    <location>
        <begin position="265"/>
        <end position="267"/>
    </location>
</feature>
<feature type="transmembrane region" description="Helical" evidence="2">
    <location>
        <begin position="268"/>
        <end position="288"/>
    </location>
</feature>
<feature type="topological domain" description="Cytoplasmic" evidence="1">
    <location>
        <begin position="289"/>
        <end position="293"/>
    </location>
</feature>
<feature type="domain" description="EamA 1" evidence="2">
    <location>
        <begin position="15"/>
        <end position="137"/>
    </location>
</feature>
<feature type="domain" description="EamA 2" evidence="2">
    <location>
        <begin position="167"/>
        <end position="285"/>
    </location>
</feature>